<protein>
    <recommendedName>
        <fullName evidence="1">UDP-N-acetylmuramate--L-alanine ligase</fullName>
        <ecNumber evidence="1">6.3.2.8</ecNumber>
    </recommendedName>
    <alternativeName>
        <fullName evidence="1">UDP-N-acetylmuramoyl-L-alanine synthetase</fullName>
    </alternativeName>
</protein>
<proteinExistence type="inferred from homology"/>
<comment type="function">
    <text evidence="1">Cell wall formation.</text>
</comment>
<comment type="catalytic activity">
    <reaction evidence="1">
        <text>UDP-N-acetyl-alpha-D-muramate + L-alanine + ATP = UDP-N-acetyl-alpha-D-muramoyl-L-alanine + ADP + phosphate + H(+)</text>
        <dbReference type="Rhea" id="RHEA:23372"/>
        <dbReference type="ChEBI" id="CHEBI:15378"/>
        <dbReference type="ChEBI" id="CHEBI:30616"/>
        <dbReference type="ChEBI" id="CHEBI:43474"/>
        <dbReference type="ChEBI" id="CHEBI:57972"/>
        <dbReference type="ChEBI" id="CHEBI:70757"/>
        <dbReference type="ChEBI" id="CHEBI:83898"/>
        <dbReference type="ChEBI" id="CHEBI:456216"/>
        <dbReference type="EC" id="6.3.2.8"/>
    </reaction>
</comment>
<comment type="pathway">
    <text evidence="1">Cell wall biogenesis; peptidoglycan biosynthesis.</text>
</comment>
<comment type="subcellular location">
    <subcellularLocation>
        <location evidence="1">Cytoplasm</location>
    </subcellularLocation>
</comment>
<comment type="similarity">
    <text evidence="1">Belongs to the MurCDEF family.</text>
</comment>
<name>MURC_CROS8</name>
<evidence type="ECO:0000255" key="1">
    <source>
        <dbReference type="HAMAP-Rule" id="MF_00046"/>
    </source>
</evidence>
<gene>
    <name evidence="1" type="primary">murC</name>
    <name type="ordered locus">ESA_03247</name>
</gene>
<organism>
    <name type="scientific">Cronobacter sakazakii (strain ATCC BAA-894)</name>
    <name type="common">Enterobacter sakazakii</name>
    <dbReference type="NCBI Taxonomy" id="290339"/>
    <lineage>
        <taxon>Bacteria</taxon>
        <taxon>Pseudomonadati</taxon>
        <taxon>Pseudomonadota</taxon>
        <taxon>Gammaproteobacteria</taxon>
        <taxon>Enterobacterales</taxon>
        <taxon>Enterobacteriaceae</taxon>
        <taxon>Cronobacter</taxon>
    </lineage>
</organism>
<sequence>MNTQQLAKLRSIVPEMRRVRHIHFVGIGGAGMGGIAEVLANEGYQISGSDLAPNAVTQQLTALGATIYFNHRPENVLDASVVVVSSAISADNPEIVAAHEARIPVIRRAEMLAELMRFRHGIAVAGTHGKTTTTAMVSSIYAEAGLDPTFVNGGLVKAAGTHARLGNSRYLIAEADESDASFLHLQPMVAIVTNIEADHMDTYHGDFENLKQTFINFLHNLPFYGRAVMCVDDPVIRELLPRVGRQITTYGFSEDADVRVENYRQTGAQGHFTLVRQDKPELHVTLNAPGRHNALNAAAAVSVATEEGIEDDAILRALESFQGTGRRFDFLGEFPLANVNGKSGTAMLVDDYGHHPTEVDATVRAARAGWPEKNLVMIFQPHRYTRTRDLYDDFANVLSQVDVLLMLDVYPAGEAPIPGADSRSLCRTIRARGKVDPILVSDPAQVAAMLAPVLSGNDLILVQGAGNIGKIARQLAEAKLQPEENAHG</sequence>
<feature type="chain" id="PRO_1000004342" description="UDP-N-acetylmuramate--L-alanine ligase">
    <location>
        <begin position="1"/>
        <end position="488"/>
    </location>
</feature>
<feature type="binding site" evidence="1">
    <location>
        <begin position="126"/>
        <end position="132"/>
    </location>
    <ligand>
        <name>ATP</name>
        <dbReference type="ChEBI" id="CHEBI:30616"/>
    </ligand>
</feature>
<dbReference type="EC" id="6.3.2.8" evidence="1"/>
<dbReference type="EMBL" id="CP000783">
    <property type="protein sequence ID" value="ABU78469.1"/>
    <property type="molecule type" value="Genomic_DNA"/>
</dbReference>
<dbReference type="RefSeq" id="WP_007892894.1">
    <property type="nucleotide sequence ID" value="NC_009778.1"/>
</dbReference>
<dbReference type="SMR" id="A7MIF0"/>
<dbReference type="GeneID" id="56731933"/>
<dbReference type="KEGG" id="esa:ESA_03247"/>
<dbReference type="HOGENOM" id="CLU_028104_2_2_6"/>
<dbReference type="UniPathway" id="UPA00219"/>
<dbReference type="Proteomes" id="UP000000260">
    <property type="component" value="Chromosome"/>
</dbReference>
<dbReference type="GO" id="GO:0005737">
    <property type="term" value="C:cytoplasm"/>
    <property type="evidence" value="ECO:0007669"/>
    <property type="project" value="UniProtKB-SubCell"/>
</dbReference>
<dbReference type="GO" id="GO:0005524">
    <property type="term" value="F:ATP binding"/>
    <property type="evidence" value="ECO:0007669"/>
    <property type="project" value="UniProtKB-UniRule"/>
</dbReference>
<dbReference type="GO" id="GO:0008763">
    <property type="term" value="F:UDP-N-acetylmuramate-L-alanine ligase activity"/>
    <property type="evidence" value="ECO:0007669"/>
    <property type="project" value="UniProtKB-UniRule"/>
</dbReference>
<dbReference type="GO" id="GO:0051301">
    <property type="term" value="P:cell division"/>
    <property type="evidence" value="ECO:0007669"/>
    <property type="project" value="UniProtKB-KW"/>
</dbReference>
<dbReference type="GO" id="GO:0071555">
    <property type="term" value="P:cell wall organization"/>
    <property type="evidence" value="ECO:0007669"/>
    <property type="project" value="UniProtKB-KW"/>
</dbReference>
<dbReference type="GO" id="GO:0009252">
    <property type="term" value="P:peptidoglycan biosynthetic process"/>
    <property type="evidence" value="ECO:0007669"/>
    <property type="project" value="UniProtKB-UniRule"/>
</dbReference>
<dbReference type="GO" id="GO:0008360">
    <property type="term" value="P:regulation of cell shape"/>
    <property type="evidence" value="ECO:0007669"/>
    <property type="project" value="UniProtKB-KW"/>
</dbReference>
<dbReference type="FunFam" id="3.40.1190.10:FF:000001">
    <property type="entry name" value="UDP-N-acetylmuramate--L-alanine ligase"/>
    <property type="match status" value="1"/>
</dbReference>
<dbReference type="FunFam" id="3.40.50.720:FF:000046">
    <property type="entry name" value="UDP-N-acetylmuramate--L-alanine ligase"/>
    <property type="match status" value="1"/>
</dbReference>
<dbReference type="FunFam" id="3.90.190.20:FF:000001">
    <property type="entry name" value="UDP-N-acetylmuramate--L-alanine ligase"/>
    <property type="match status" value="1"/>
</dbReference>
<dbReference type="Gene3D" id="3.90.190.20">
    <property type="entry name" value="Mur ligase, C-terminal domain"/>
    <property type="match status" value="1"/>
</dbReference>
<dbReference type="Gene3D" id="3.40.1190.10">
    <property type="entry name" value="Mur-like, catalytic domain"/>
    <property type="match status" value="1"/>
</dbReference>
<dbReference type="Gene3D" id="3.40.50.720">
    <property type="entry name" value="NAD(P)-binding Rossmann-like Domain"/>
    <property type="match status" value="1"/>
</dbReference>
<dbReference type="HAMAP" id="MF_00046">
    <property type="entry name" value="MurC"/>
    <property type="match status" value="1"/>
</dbReference>
<dbReference type="InterPro" id="IPR036565">
    <property type="entry name" value="Mur-like_cat_sf"/>
</dbReference>
<dbReference type="InterPro" id="IPR004101">
    <property type="entry name" value="Mur_ligase_C"/>
</dbReference>
<dbReference type="InterPro" id="IPR036615">
    <property type="entry name" value="Mur_ligase_C_dom_sf"/>
</dbReference>
<dbReference type="InterPro" id="IPR013221">
    <property type="entry name" value="Mur_ligase_cen"/>
</dbReference>
<dbReference type="InterPro" id="IPR000713">
    <property type="entry name" value="Mur_ligase_N"/>
</dbReference>
<dbReference type="InterPro" id="IPR050061">
    <property type="entry name" value="MurCDEF_pg_biosynth"/>
</dbReference>
<dbReference type="InterPro" id="IPR005758">
    <property type="entry name" value="UDP-N-AcMur_Ala_ligase_MurC"/>
</dbReference>
<dbReference type="NCBIfam" id="TIGR01082">
    <property type="entry name" value="murC"/>
    <property type="match status" value="1"/>
</dbReference>
<dbReference type="PANTHER" id="PTHR43445:SF3">
    <property type="entry name" value="UDP-N-ACETYLMURAMATE--L-ALANINE LIGASE"/>
    <property type="match status" value="1"/>
</dbReference>
<dbReference type="PANTHER" id="PTHR43445">
    <property type="entry name" value="UDP-N-ACETYLMURAMATE--L-ALANINE LIGASE-RELATED"/>
    <property type="match status" value="1"/>
</dbReference>
<dbReference type="Pfam" id="PF01225">
    <property type="entry name" value="Mur_ligase"/>
    <property type="match status" value="1"/>
</dbReference>
<dbReference type="Pfam" id="PF02875">
    <property type="entry name" value="Mur_ligase_C"/>
    <property type="match status" value="1"/>
</dbReference>
<dbReference type="Pfam" id="PF08245">
    <property type="entry name" value="Mur_ligase_M"/>
    <property type="match status" value="1"/>
</dbReference>
<dbReference type="SUPFAM" id="SSF51984">
    <property type="entry name" value="MurCD N-terminal domain"/>
    <property type="match status" value="1"/>
</dbReference>
<dbReference type="SUPFAM" id="SSF53623">
    <property type="entry name" value="MurD-like peptide ligases, catalytic domain"/>
    <property type="match status" value="1"/>
</dbReference>
<dbReference type="SUPFAM" id="SSF53244">
    <property type="entry name" value="MurD-like peptide ligases, peptide-binding domain"/>
    <property type="match status" value="1"/>
</dbReference>
<keyword id="KW-0067">ATP-binding</keyword>
<keyword id="KW-0131">Cell cycle</keyword>
<keyword id="KW-0132">Cell division</keyword>
<keyword id="KW-0133">Cell shape</keyword>
<keyword id="KW-0961">Cell wall biogenesis/degradation</keyword>
<keyword id="KW-0963">Cytoplasm</keyword>
<keyword id="KW-0436">Ligase</keyword>
<keyword id="KW-0547">Nucleotide-binding</keyword>
<keyword id="KW-0573">Peptidoglycan synthesis</keyword>
<keyword id="KW-1185">Reference proteome</keyword>
<reference key="1">
    <citation type="journal article" date="2010" name="PLoS ONE">
        <title>Genome sequence of Cronobacter sakazakii BAA-894 and comparative genomic hybridization analysis with other Cronobacter species.</title>
        <authorList>
            <person name="Kucerova E."/>
            <person name="Clifton S.W."/>
            <person name="Xia X.Q."/>
            <person name="Long F."/>
            <person name="Porwollik S."/>
            <person name="Fulton L."/>
            <person name="Fronick C."/>
            <person name="Minx P."/>
            <person name="Kyung K."/>
            <person name="Warren W."/>
            <person name="Fulton R."/>
            <person name="Feng D."/>
            <person name="Wollam A."/>
            <person name="Shah N."/>
            <person name="Bhonagiri V."/>
            <person name="Nash W.E."/>
            <person name="Hallsworth-Pepin K."/>
            <person name="Wilson R.K."/>
            <person name="McClelland M."/>
            <person name="Forsythe S.J."/>
        </authorList>
    </citation>
    <scope>NUCLEOTIDE SEQUENCE [LARGE SCALE GENOMIC DNA]</scope>
    <source>
        <strain>ATCC BAA-894</strain>
    </source>
</reference>
<accession>A7MIF0</accession>